<feature type="chain" id="PRO_0000265325" description="Small ribosomal subunit protein uS19">
    <location>
        <begin position="1"/>
        <end position="93"/>
    </location>
</feature>
<feature type="region of interest" description="Disordered" evidence="2">
    <location>
        <begin position="72"/>
        <end position="93"/>
    </location>
</feature>
<feature type="compositionally biased region" description="Basic residues" evidence="2">
    <location>
        <begin position="80"/>
        <end position="93"/>
    </location>
</feature>
<organism>
    <name type="scientific">Aster yellows witches'-broom phytoplasma (strain AYWB)</name>
    <dbReference type="NCBI Taxonomy" id="322098"/>
    <lineage>
        <taxon>Bacteria</taxon>
        <taxon>Bacillati</taxon>
        <taxon>Mycoplasmatota</taxon>
        <taxon>Mollicutes</taxon>
        <taxon>Acholeplasmatales</taxon>
        <taxon>Acholeplasmataceae</taxon>
        <taxon>Candidatus Phytoplasma</taxon>
        <taxon>16SrI (Aster yellows group)</taxon>
    </lineage>
</organism>
<proteinExistence type="inferred from homology"/>
<evidence type="ECO:0000255" key="1">
    <source>
        <dbReference type="HAMAP-Rule" id="MF_00531"/>
    </source>
</evidence>
<evidence type="ECO:0000256" key="2">
    <source>
        <dbReference type="SAM" id="MobiDB-lite"/>
    </source>
</evidence>
<evidence type="ECO:0000305" key="3"/>
<protein>
    <recommendedName>
        <fullName evidence="1">Small ribosomal subunit protein uS19</fullName>
    </recommendedName>
    <alternativeName>
        <fullName evidence="3">30S ribosomal protein S19</fullName>
    </alternativeName>
</protein>
<dbReference type="EMBL" id="CP000061">
    <property type="protein sequence ID" value="ABC65635.1"/>
    <property type="molecule type" value="Genomic_DNA"/>
</dbReference>
<dbReference type="RefSeq" id="WP_011412797.1">
    <property type="nucleotide sequence ID" value="NC_007716.1"/>
</dbReference>
<dbReference type="SMR" id="Q2NIV8"/>
<dbReference type="STRING" id="322098.AYWB_518"/>
<dbReference type="KEGG" id="ayw:AYWB_518"/>
<dbReference type="eggNOG" id="COG0185">
    <property type="taxonomic scope" value="Bacteria"/>
</dbReference>
<dbReference type="HOGENOM" id="CLU_144911_0_1_14"/>
<dbReference type="OrthoDB" id="9797833at2"/>
<dbReference type="PhylomeDB" id="Q2NIV8"/>
<dbReference type="Proteomes" id="UP000001934">
    <property type="component" value="Chromosome"/>
</dbReference>
<dbReference type="GO" id="GO:0005737">
    <property type="term" value="C:cytoplasm"/>
    <property type="evidence" value="ECO:0007669"/>
    <property type="project" value="UniProtKB-ARBA"/>
</dbReference>
<dbReference type="GO" id="GO:0015935">
    <property type="term" value="C:small ribosomal subunit"/>
    <property type="evidence" value="ECO:0007669"/>
    <property type="project" value="InterPro"/>
</dbReference>
<dbReference type="GO" id="GO:0019843">
    <property type="term" value="F:rRNA binding"/>
    <property type="evidence" value="ECO:0007669"/>
    <property type="project" value="UniProtKB-UniRule"/>
</dbReference>
<dbReference type="GO" id="GO:0003735">
    <property type="term" value="F:structural constituent of ribosome"/>
    <property type="evidence" value="ECO:0007669"/>
    <property type="project" value="InterPro"/>
</dbReference>
<dbReference type="GO" id="GO:0000028">
    <property type="term" value="P:ribosomal small subunit assembly"/>
    <property type="evidence" value="ECO:0007669"/>
    <property type="project" value="TreeGrafter"/>
</dbReference>
<dbReference type="GO" id="GO:0006412">
    <property type="term" value="P:translation"/>
    <property type="evidence" value="ECO:0007669"/>
    <property type="project" value="UniProtKB-UniRule"/>
</dbReference>
<dbReference type="FunFam" id="3.30.860.10:FF:000001">
    <property type="entry name" value="30S ribosomal protein S19"/>
    <property type="match status" value="1"/>
</dbReference>
<dbReference type="Gene3D" id="3.30.860.10">
    <property type="entry name" value="30s Ribosomal Protein S19, Chain A"/>
    <property type="match status" value="1"/>
</dbReference>
<dbReference type="HAMAP" id="MF_00531">
    <property type="entry name" value="Ribosomal_uS19"/>
    <property type="match status" value="1"/>
</dbReference>
<dbReference type="InterPro" id="IPR002222">
    <property type="entry name" value="Ribosomal_uS19"/>
</dbReference>
<dbReference type="InterPro" id="IPR005732">
    <property type="entry name" value="Ribosomal_uS19_bac-type"/>
</dbReference>
<dbReference type="InterPro" id="IPR020934">
    <property type="entry name" value="Ribosomal_uS19_CS"/>
</dbReference>
<dbReference type="InterPro" id="IPR023575">
    <property type="entry name" value="Ribosomal_uS19_SF"/>
</dbReference>
<dbReference type="NCBIfam" id="TIGR01050">
    <property type="entry name" value="rpsS_bact"/>
    <property type="match status" value="1"/>
</dbReference>
<dbReference type="PANTHER" id="PTHR11880">
    <property type="entry name" value="RIBOSOMAL PROTEIN S19P FAMILY MEMBER"/>
    <property type="match status" value="1"/>
</dbReference>
<dbReference type="PANTHER" id="PTHR11880:SF8">
    <property type="entry name" value="SMALL RIBOSOMAL SUBUNIT PROTEIN US19M"/>
    <property type="match status" value="1"/>
</dbReference>
<dbReference type="Pfam" id="PF00203">
    <property type="entry name" value="Ribosomal_S19"/>
    <property type="match status" value="1"/>
</dbReference>
<dbReference type="PIRSF" id="PIRSF002144">
    <property type="entry name" value="Ribosomal_S19"/>
    <property type="match status" value="1"/>
</dbReference>
<dbReference type="PRINTS" id="PR00975">
    <property type="entry name" value="RIBOSOMALS19"/>
</dbReference>
<dbReference type="SUPFAM" id="SSF54570">
    <property type="entry name" value="Ribosomal protein S19"/>
    <property type="match status" value="1"/>
</dbReference>
<dbReference type="PROSITE" id="PS00323">
    <property type="entry name" value="RIBOSOMAL_S19"/>
    <property type="match status" value="1"/>
</dbReference>
<accession>Q2NIV8</accession>
<name>RS19_AYWBP</name>
<comment type="function">
    <text evidence="1">Protein S19 forms a complex with S13 that binds strongly to the 16S ribosomal RNA.</text>
</comment>
<comment type="similarity">
    <text evidence="1">Belongs to the universal ribosomal protein uS19 family.</text>
</comment>
<sequence>MPRSVKKGPIVASHLLAKIEKQKNLKNKKVIQTWSRSSTITPIFVGHKIAVYNGREHIPVYITENMVGHKLGEFSPTRTYRGHNKKDKKMQKK</sequence>
<keyword id="KW-0687">Ribonucleoprotein</keyword>
<keyword id="KW-0689">Ribosomal protein</keyword>
<keyword id="KW-0694">RNA-binding</keyword>
<keyword id="KW-0699">rRNA-binding</keyword>
<reference key="1">
    <citation type="journal article" date="2006" name="J. Bacteriol.">
        <title>Living with genome instability: the adaptation of phytoplasmas to diverse environments of their insect and plant hosts.</title>
        <authorList>
            <person name="Bai X."/>
            <person name="Zhang J."/>
            <person name="Ewing A."/>
            <person name="Miller S.A."/>
            <person name="Jancso Radek A."/>
            <person name="Shevchenko D.V."/>
            <person name="Tsukerman K."/>
            <person name="Walunas T."/>
            <person name="Lapidus A."/>
            <person name="Campbell J.W."/>
            <person name="Hogenhout S.A."/>
        </authorList>
    </citation>
    <scope>NUCLEOTIDE SEQUENCE [LARGE SCALE GENOMIC DNA]</scope>
    <source>
        <strain>AYWB</strain>
    </source>
</reference>
<gene>
    <name evidence="1" type="primary">rpsS</name>
    <name type="ordered locus">AYWB_518</name>
</gene>